<feature type="chain" id="PRO_0000435972" description="Cell pattern formation-associated protein STUA">
    <location>
        <begin position="1"/>
        <end position="617"/>
    </location>
</feature>
<feature type="domain" description="HTH APSES-type" evidence="2">
    <location>
        <begin position="106"/>
        <end position="212"/>
    </location>
</feature>
<feature type="DNA-binding region" description="H-T-H motif" evidence="2">
    <location>
        <begin position="140"/>
        <end position="161"/>
    </location>
</feature>
<feature type="region of interest" description="Disordered" evidence="3">
    <location>
        <begin position="1"/>
        <end position="79"/>
    </location>
</feature>
<feature type="region of interest" description="Disordered" evidence="3">
    <location>
        <begin position="223"/>
        <end position="274"/>
    </location>
</feature>
<feature type="region of interest" description="Disordered" evidence="3">
    <location>
        <begin position="300"/>
        <end position="451"/>
    </location>
</feature>
<feature type="region of interest" description="Disordered" evidence="3">
    <location>
        <begin position="463"/>
        <end position="617"/>
    </location>
</feature>
<feature type="region of interest" description="Nuclear localization domain" evidence="1">
    <location>
        <begin position="569"/>
        <end position="593"/>
    </location>
</feature>
<feature type="compositionally biased region" description="Polar residues" evidence="3">
    <location>
        <begin position="24"/>
        <end position="34"/>
    </location>
</feature>
<feature type="compositionally biased region" description="Low complexity" evidence="3">
    <location>
        <begin position="45"/>
        <end position="58"/>
    </location>
</feature>
<feature type="compositionally biased region" description="Polar residues" evidence="3">
    <location>
        <begin position="61"/>
        <end position="76"/>
    </location>
</feature>
<feature type="compositionally biased region" description="Low complexity" evidence="3">
    <location>
        <begin position="305"/>
        <end position="318"/>
    </location>
</feature>
<feature type="compositionally biased region" description="Low complexity" evidence="3">
    <location>
        <begin position="334"/>
        <end position="345"/>
    </location>
</feature>
<feature type="compositionally biased region" description="Polar residues" evidence="3">
    <location>
        <begin position="346"/>
        <end position="361"/>
    </location>
</feature>
<feature type="compositionally biased region" description="Polar residues" evidence="3">
    <location>
        <begin position="368"/>
        <end position="382"/>
    </location>
</feature>
<feature type="compositionally biased region" description="Basic and acidic residues" evidence="3">
    <location>
        <begin position="438"/>
        <end position="447"/>
    </location>
</feature>
<feature type="compositionally biased region" description="Low complexity" evidence="3">
    <location>
        <begin position="488"/>
        <end position="509"/>
    </location>
</feature>
<feature type="compositionally biased region" description="Polar residues" evidence="3">
    <location>
        <begin position="519"/>
        <end position="533"/>
    </location>
</feature>
<feature type="compositionally biased region" description="Polar residues" evidence="3">
    <location>
        <begin position="553"/>
        <end position="563"/>
    </location>
</feature>
<feature type="compositionally biased region" description="Low complexity" evidence="3">
    <location>
        <begin position="599"/>
        <end position="617"/>
    </location>
</feature>
<keyword id="KW-0183">Conidiation</keyword>
<keyword id="KW-0238">DNA-binding</keyword>
<keyword id="KW-0539">Nucleus</keyword>
<keyword id="KW-0749">Sporulation</keyword>
<keyword id="KW-0804">Transcription</keyword>
<keyword id="KW-0805">Transcription regulation</keyword>
<dbReference type="EMBL" id="EF408244">
    <property type="protein sequence ID" value="ABQ43358.1"/>
    <property type="status" value="ALT_INIT"/>
    <property type="molecule type" value="Genomic_DNA"/>
</dbReference>
<dbReference type="EMBL" id="EF408244">
    <property type="protein sequence ID" value="ABQ43363.1"/>
    <property type="status" value="ALT_INIT"/>
    <property type="molecule type" value="Genomic_DNA"/>
</dbReference>
<dbReference type="EMBL" id="EF634312">
    <property type="protein sequence ID" value="ABV00676.1"/>
    <property type="status" value="ALT_INIT"/>
    <property type="molecule type" value="mRNA"/>
</dbReference>
<dbReference type="SMR" id="A8JPF9"/>
<dbReference type="GO" id="GO:0005634">
    <property type="term" value="C:nucleus"/>
    <property type="evidence" value="ECO:0007669"/>
    <property type="project" value="UniProtKB-SubCell"/>
</dbReference>
<dbReference type="GO" id="GO:0003700">
    <property type="term" value="F:DNA-binding transcription factor activity"/>
    <property type="evidence" value="ECO:0007669"/>
    <property type="project" value="TreeGrafter"/>
</dbReference>
<dbReference type="GO" id="GO:0043565">
    <property type="term" value="F:sequence-specific DNA binding"/>
    <property type="evidence" value="ECO:0007669"/>
    <property type="project" value="TreeGrafter"/>
</dbReference>
<dbReference type="GO" id="GO:0048315">
    <property type="term" value="P:conidium formation"/>
    <property type="evidence" value="ECO:0007669"/>
    <property type="project" value="UniProtKB-KW"/>
</dbReference>
<dbReference type="GO" id="GO:0045944">
    <property type="term" value="P:positive regulation of transcription by RNA polymerase II"/>
    <property type="evidence" value="ECO:0007669"/>
    <property type="project" value="TreeGrafter"/>
</dbReference>
<dbReference type="GO" id="GO:0030435">
    <property type="term" value="P:sporulation resulting in formation of a cellular spore"/>
    <property type="evidence" value="ECO:0007669"/>
    <property type="project" value="UniProtKB-KW"/>
</dbReference>
<dbReference type="FunFam" id="3.10.260.10:FF:000003">
    <property type="entry name" value="Ascospore maturation 1 protein"/>
    <property type="match status" value="1"/>
</dbReference>
<dbReference type="Gene3D" id="3.10.260.10">
    <property type="entry name" value="Transcription regulator HTH, APSES-type DNA-binding domain"/>
    <property type="match status" value="1"/>
</dbReference>
<dbReference type="InterPro" id="IPR029790">
    <property type="entry name" value="EFG1/Phd1/StuA"/>
</dbReference>
<dbReference type="InterPro" id="IPR036887">
    <property type="entry name" value="HTH_APSES_sf"/>
</dbReference>
<dbReference type="InterPro" id="IPR018004">
    <property type="entry name" value="KilA/APSES_HTH"/>
</dbReference>
<dbReference type="InterPro" id="IPR003163">
    <property type="entry name" value="Tscrpt_reg_HTH_APSES-type"/>
</dbReference>
<dbReference type="PANTHER" id="PTHR47792">
    <property type="entry name" value="PROTEIN SOK2-RELATED"/>
    <property type="match status" value="1"/>
</dbReference>
<dbReference type="PANTHER" id="PTHR47792:SF1">
    <property type="entry name" value="PROTEIN SOK2-RELATED"/>
    <property type="match status" value="1"/>
</dbReference>
<dbReference type="Pfam" id="PF04383">
    <property type="entry name" value="KilA-N"/>
    <property type="match status" value="1"/>
</dbReference>
<dbReference type="SMART" id="SM01252">
    <property type="entry name" value="KilA-N"/>
    <property type="match status" value="1"/>
</dbReference>
<dbReference type="SUPFAM" id="SSF54616">
    <property type="entry name" value="DNA-binding domain of Mlu1-box binding protein MBP1"/>
    <property type="match status" value="1"/>
</dbReference>
<dbReference type="PROSITE" id="PS51299">
    <property type="entry name" value="HTH_APSES"/>
    <property type="match status" value="1"/>
</dbReference>
<comment type="function">
    <text evidence="1 4">Transcription factor that regulates asexual reproduction (By similarity). Binds the StuA-response elements (StRE) with the consensus sequence 5'-(A/T)CGCG(T/A)N(A/C)-3' at the promoters of target genes (By similarity). Required for the formation of aerial hyphae, efficient conidiation, and the formation of perithecia (PubMed:17849713). Essential for the generation of normal turgor pressure within the appressorium (PubMed:17849713). Required for infection of intact apple fruit and penetration of onion epidermal cells (PubMed:17849713).</text>
</comment>
<comment type="subcellular location">
    <subcellularLocation>
        <location evidence="1">Nucleus</location>
    </subcellularLocation>
</comment>
<comment type="disruption phenotype">
    <text evidence="4">Impairs conidiation and ability of their appressoria to form a penetration peg, leading to unability to infect unwounded Granny Smith apples or onion (PubMed:17849713).</text>
</comment>
<comment type="similarity">
    <text evidence="6">Belongs to the EFG1/PHD1/stuA family.</text>
</comment>
<comment type="sequence caution" evidence="6">
    <conflict type="erroneous initiation">
        <sequence resource="EMBL-CDS" id="ABQ43358"/>
    </conflict>
    <text>Extended N-terminus.</text>
</comment>
<comment type="sequence caution" evidence="6">
    <conflict type="erroneous initiation">
        <sequence resource="EMBL-CDS" id="ABQ43363"/>
    </conflict>
    <text>Extended N-terminus.</text>
</comment>
<comment type="sequence caution" evidence="6">
    <conflict type="erroneous initiation">
        <sequence resource="EMBL-CDS" id="ABV00676"/>
    </conflict>
    <text>Extended N-terminus.</text>
</comment>
<gene>
    <name evidence="5" type="primary">STUA</name>
</gene>
<protein>
    <recommendedName>
        <fullName evidence="6">Cell pattern formation-associated protein STUA</fullName>
    </recommendedName>
    <alternativeName>
        <fullName evidence="1">Stunted protein A</fullName>
    </alternativeName>
</protein>
<proteinExistence type="evidence at transcript level"/>
<reference key="1">
    <citation type="journal article" date="2007" name="Mol. Plant Microbe Interact.">
        <title>GcSTUA, an APSES transcription factor, is required for generation of appressorial turgor pressure and full pathogenicity of Glomerella cingulata.</title>
        <authorList>
            <person name="Tong X.Z."/>
            <person name="Zhang X."/>
            <person name="Plummer K.M."/>
            <person name="Stowell K.M."/>
            <person name="Sullivan P.A."/>
            <person name="Farley P.C."/>
        </authorList>
    </citation>
    <scope>NUCLEOTIDE SEQUENCE [GENOMIC DNA / MRNA]</scope>
    <scope>FUNCTION</scope>
    <scope>DISRUPTION PHENOTYPE</scope>
</reference>
<name>STUA_COLGL</name>
<accession>A8JPF9</accession>
<evidence type="ECO:0000250" key="1">
    <source>
        <dbReference type="UniProtKB" id="P36011"/>
    </source>
</evidence>
<evidence type="ECO:0000255" key="2">
    <source>
        <dbReference type="PROSITE-ProRule" id="PRU00630"/>
    </source>
</evidence>
<evidence type="ECO:0000256" key="3">
    <source>
        <dbReference type="SAM" id="MobiDB-lite"/>
    </source>
</evidence>
<evidence type="ECO:0000269" key="4">
    <source>
    </source>
</evidence>
<evidence type="ECO:0000303" key="5">
    <source>
    </source>
</evidence>
<evidence type="ECO:0000305" key="6"/>
<organism>
    <name type="scientific">Colletotrichum gloeosporioides</name>
    <name type="common">Anthracnose fungus</name>
    <name type="synonym">Glomerella cingulata</name>
    <dbReference type="NCBI Taxonomy" id="474922"/>
    <lineage>
        <taxon>Eukaryota</taxon>
        <taxon>Fungi</taxon>
        <taxon>Dikarya</taxon>
        <taxon>Ascomycota</taxon>
        <taxon>Pezizomycotina</taxon>
        <taxon>Sordariomycetes</taxon>
        <taxon>Hypocreomycetidae</taxon>
        <taxon>Glomerellales</taxon>
        <taxon>Glomerellaceae</taxon>
        <taxon>Colletotrichum</taxon>
        <taxon>Colletotrichum gloeosporioides species complex</taxon>
    </lineage>
</organism>
<sequence length="617" mass="66198">MNQPAADMYYSQHMSAGQAPPPQTVTSGAMSYHSQHPPLQPTHMPQYAPQPQYSQYGYANGLTSPQSAQPASQMGQNVLPLPGVATQGFQGFDTTGQVAPPGMKPRVTATLWEDEGSLCFQVEARGICVARREDNHMINGTKLLNVAGMTRGRRDGILKSEKVRHVVKIGPMHLKGVWIPFERALDFANKEKITELLYPLFVHNIGALLYHPTNQTRTNQVMAAAERRKQEQNQMRGAPQTGAPGLPSIQQHHHHMSLPGPQQSLPSHAQMGRPSLDRAHTFPTPPTSASSVMGGNMNASDSGFQWAQGQGMGSAQGANPMSIDTGLSNARSMPATPASTPPGTTIQNMQSYQSGAQQYDNSRPMYNPSAQQSPYQATNPASQDRPVYGQPDPYAKNDMGPPTTRPATSGAPQDQKPANGIIHADQSGGQPAGDEEAEHDHDAEYTHDSGAYDASRASYNYSAPAVGNLPAEHQHLSPEMTGSPSHPPASGRATPRTAAAPQPYYSQQAGYNTPPRVPQQPSSNLYNVMSNDRGTAAGAGTGDVYQPQADMGSMSNGYASQMNGAGGIKRGRDEDDDLQRPSSGGGMDLKRRKTLLDSQVPAMAYAPPVMAQQPRRR</sequence>